<feature type="chain" id="PRO_0000360291" description="NAD(P)H-quinone oxidoreductase subunit 6, chloroplastic">
    <location>
        <begin position="1"/>
        <end position="176"/>
    </location>
</feature>
<feature type="transmembrane region" description="Helical" evidence="2">
    <location>
        <begin position="10"/>
        <end position="30"/>
    </location>
</feature>
<feature type="transmembrane region" description="Helical" evidence="2">
    <location>
        <begin position="32"/>
        <end position="52"/>
    </location>
</feature>
<feature type="transmembrane region" description="Helical" evidence="2">
    <location>
        <begin position="61"/>
        <end position="81"/>
    </location>
</feature>
<feature type="transmembrane region" description="Helical" evidence="2">
    <location>
        <begin position="92"/>
        <end position="112"/>
    </location>
</feature>
<feature type="transmembrane region" description="Helical" evidence="2">
    <location>
        <begin position="152"/>
        <end position="172"/>
    </location>
</feature>
<evidence type="ECO:0000250" key="1"/>
<evidence type="ECO:0000255" key="2"/>
<evidence type="ECO:0000305" key="3"/>
<dbReference type="EC" id="7.1.1.-"/>
<dbReference type="EMBL" id="DQ347958">
    <property type="protein sequence ID" value="ABC56267.1"/>
    <property type="molecule type" value="Genomic_DNA"/>
</dbReference>
<dbReference type="RefSeq" id="YP_538903.1">
    <property type="nucleotide sequence ID" value="NC_007943.1"/>
</dbReference>
<dbReference type="SMR" id="Q2MID4"/>
<dbReference type="GeneID" id="3989492"/>
<dbReference type="GO" id="GO:0009535">
    <property type="term" value="C:chloroplast thylakoid membrane"/>
    <property type="evidence" value="ECO:0007669"/>
    <property type="project" value="UniProtKB-SubCell"/>
</dbReference>
<dbReference type="GO" id="GO:0008137">
    <property type="term" value="F:NADH dehydrogenase (ubiquinone) activity"/>
    <property type="evidence" value="ECO:0007669"/>
    <property type="project" value="InterPro"/>
</dbReference>
<dbReference type="GO" id="GO:0048038">
    <property type="term" value="F:quinone binding"/>
    <property type="evidence" value="ECO:0007669"/>
    <property type="project" value="UniProtKB-KW"/>
</dbReference>
<dbReference type="FunFam" id="1.20.120.1200:FF:000002">
    <property type="entry name" value="NAD(P)H-quinone oxidoreductase subunit 6, chloroplastic"/>
    <property type="match status" value="1"/>
</dbReference>
<dbReference type="Gene3D" id="1.20.120.1200">
    <property type="entry name" value="NADH-ubiquinone/plastoquinone oxidoreductase chain 6, subunit NuoJ"/>
    <property type="match status" value="1"/>
</dbReference>
<dbReference type="InterPro" id="IPR050290">
    <property type="entry name" value="NAD(P)H-Q_Oxidoreduct_6"/>
</dbReference>
<dbReference type="InterPro" id="IPR001457">
    <property type="entry name" value="NADH_UbQ/plastoQ_OxRdtase_su6"/>
</dbReference>
<dbReference type="InterPro" id="IPR042106">
    <property type="entry name" value="Nuo/plastoQ_OxRdtase_6_NuoJ"/>
</dbReference>
<dbReference type="PANTHER" id="PTHR48479">
    <property type="entry name" value="NAD(P)H-QUINONE OXIDOREDUCTASE SUBUNIT 6, CHLOROPLASTIC"/>
    <property type="match status" value="1"/>
</dbReference>
<dbReference type="PANTHER" id="PTHR48479:SF1">
    <property type="entry name" value="NAD(P)H-QUINONE OXIDOREDUCTASE SUBUNIT 6, CHLOROPLASTIC"/>
    <property type="match status" value="1"/>
</dbReference>
<dbReference type="Pfam" id="PF00499">
    <property type="entry name" value="Oxidored_q3"/>
    <property type="match status" value="1"/>
</dbReference>
<comment type="function">
    <text evidence="1">NDH shuttles electrons from NAD(P)H:plastoquinone, via FMN and iron-sulfur (Fe-S) centers, to quinones in the photosynthetic chain and possibly in a chloroplast respiratory chain. The immediate electron acceptor for the enzyme in this species is believed to be plastoquinone. Couples the redox reaction to proton translocation, and thus conserves the redox energy in a proton gradient (By similarity).</text>
</comment>
<comment type="catalytic activity">
    <reaction>
        <text>a plastoquinone + NADH + (n+1) H(+)(in) = a plastoquinol + NAD(+) + n H(+)(out)</text>
        <dbReference type="Rhea" id="RHEA:42608"/>
        <dbReference type="Rhea" id="RHEA-COMP:9561"/>
        <dbReference type="Rhea" id="RHEA-COMP:9562"/>
        <dbReference type="ChEBI" id="CHEBI:15378"/>
        <dbReference type="ChEBI" id="CHEBI:17757"/>
        <dbReference type="ChEBI" id="CHEBI:57540"/>
        <dbReference type="ChEBI" id="CHEBI:57945"/>
        <dbReference type="ChEBI" id="CHEBI:62192"/>
    </reaction>
</comment>
<comment type="catalytic activity">
    <reaction>
        <text>a plastoquinone + NADPH + (n+1) H(+)(in) = a plastoquinol + NADP(+) + n H(+)(out)</text>
        <dbReference type="Rhea" id="RHEA:42612"/>
        <dbReference type="Rhea" id="RHEA-COMP:9561"/>
        <dbReference type="Rhea" id="RHEA-COMP:9562"/>
        <dbReference type="ChEBI" id="CHEBI:15378"/>
        <dbReference type="ChEBI" id="CHEBI:17757"/>
        <dbReference type="ChEBI" id="CHEBI:57783"/>
        <dbReference type="ChEBI" id="CHEBI:58349"/>
        <dbReference type="ChEBI" id="CHEBI:62192"/>
    </reaction>
</comment>
<comment type="subunit">
    <text evidence="1">NDH is composed of at least 16 different subunits, 5 of which are encoded in the nucleus.</text>
</comment>
<comment type="subcellular location">
    <subcellularLocation>
        <location evidence="1">Plastid</location>
        <location evidence="1">Chloroplast thylakoid membrane</location>
        <topology evidence="1">Multi-pass membrane protein</topology>
    </subcellularLocation>
</comment>
<comment type="similarity">
    <text evidence="3">Belongs to the complex I subunit 6 family.</text>
</comment>
<name>NU6C_SOLBU</name>
<proteinExistence type="inferred from homology"/>
<gene>
    <name type="primary">ndhG</name>
</gene>
<accession>Q2MID4</accession>
<reference key="1">
    <citation type="journal article" date="2006" name="Theor. Appl. Genet.">
        <title>Complete chloroplast genome sequences of Solanum bulbocastanum, Solanum lycopersicum and comparative analyses with other Solanaceae genomes.</title>
        <authorList>
            <person name="Daniell H."/>
            <person name="Lee S.-B."/>
            <person name="Grevich J."/>
            <person name="Saski C."/>
            <person name="Quesada-Vargas T."/>
            <person name="Guda C."/>
            <person name="Tomkins J."/>
            <person name="Jansen R.K."/>
        </authorList>
    </citation>
    <scope>NUCLEOTIDE SEQUENCE [LARGE SCALE GENOMIC DNA]</scope>
    <source>
        <strain>cv. PT29</strain>
    </source>
</reference>
<organism>
    <name type="scientific">Solanum bulbocastanum</name>
    <name type="common">Wild potato</name>
    <dbReference type="NCBI Taxonomy" id="147425"/>
    <lineage>
        <taxon>Eukaryota</taxon>
        <taxon>Viridiplantae</taxon>
        <taxon>Streptophyta</taxon>
        <taxon>Embryophyta</taxon>
        <taxon>Tracheophyta</taxon>
        <taxon>Spermatophyta</taxon>
        <taxon>Magnoliopsida</taxon>
        <taxon>eudicotyledons</taxon>
        <taxon>Gunneridae</taxon>
        <taxon>Pentapetalae</taxon>
        <taxon>asterids</taxon>
        <taxon>lamiids</taxon>
        <taxon>Solanales</taxon>
        <taxon>Solanaceae</taxon>
        <taxon>Solanoideae</taxon>
        <taxon>Solaneae</taxon>
        <taxon>Solanum</taxon>
    </lineage>
</organism>
<sequence>MDLSEPIHDFLLVFLGSGLILGGLGVVLLPNPIYSAFSLGLVLVCTSLFYILSNSYFVAAAQLLIYVGAINVLIIFAVMFMNGSEYYKDFHLWTVGNGITSMVCISLFISLITTISDTSWYGIIWTTRSNQIIEQDFLSNSQQIGIHLSTDFFLPFELISIILLVALIGAIAVARQ</sequence>
<protein>
    <recommendedName>
        <fullName>NAD(P)H-quinone oxidoreductase subunit 6, chloroplastic</fullName>
        <ecNumber>7.1.1.-</ecNumber>
    </recommendedName>
    <alternativeName>
        <fullName>NAD(P)H dehydrogenase subunit 6</fullName>
    </alternativeName>
    <alternativeName>
        <fullName>NADH-plastoquinone oxidoreductase subunit 6</fullName>
    </alternativeName>
</protein>
<keyword id="KW-0150">Chloroplast</keyword>
<keyword id="KW-0472">Membrane</keyword>
<keyword id="KW-0520">NAD</keyword>
<keyword id="KW-0521">NADP</keyword>
<keyword id="KW-0934">Plastid</keyword>
<keyword id="KW-0618">Plastoquinone</keyword>
<keyword id="KW-0874">Quinone</keyword>
<keyword id="KW-0793">Thylakoid</keyword>
<keyword id="KW-1278">Translocase</keyword>
<keyword id="KW-0812">Transmembrane</keyword>
<keyword id="KW-1133">Transmembrane helix</keyword>
<keyword id="KW-0813">Transport</keyword>
<geneLocation type="chloroplast"/>